<reference key="1">
    <citation type="journal article" date="2002" name="Nature">
        <title>The genome sequence of Schizosaccharomyces pombe.</title>
        <authorList>
            <person name="Wood V."/>
            <person name="Gwilliam R."/>
            <person name="Rajandream M.A."/>
            <person name="Lyne M.H."/>
            <person name="Lyne R."/>
            <person name="Stewart A."/>
            <person name="Sgouros J.G."/>
            <person name="Peat N."/>
            <person name="Hayles J."/>
            <person name="Baker S.G."/>
            <person name="Basham D."/>
            <person name="Bowman S."/>
            <person name="Brooks K."/>
            <person name="Brown D."/>
            <person name="Brown S."/>
            <person name="Chillingworth T."/>
            <person name="Churcher C.M."/>
            <person name="Collins M."/>
            <person name="Connor R."/>
            <person name="Cronin A."/>
            <person name="Davis P."/>
            <person name="Feltwell T."/>
            <person name="Fraser A."/>
            <person name="Gentles S."/>
            <person name="Goble A."/>
            <person name="Hamlin N."/>
            <person name="Harris D.E."/>
            <person name="Hidalgo J."/>
            <person name="Hodgson G."/>
            <person name="Holroyd S."/>
            <person name="Hornsby T."/>
            <person name="Howarth S."/>
            <person name="Huckle E.J."/>
            <person name="Hunt S."/>
            <person name="Jagels K."/>
            <person name="James K.D."/>
            <person name="Jones L."/>
            <person name="Jones M."/>
            <person name="Leather S."/>
            <person name="McDonald S."/>
            <person name="McLean J."/>
            <person name="Mooney P."/>
            <person name="Moule S."/>
            <person name="Mungall K.L."/>
            <person name="Murphy L.D."/>
            <person name="Niblett D."/>
            <person name="Odell C."/>
            <person name="Oliver K."/>
            <person name="O'Neil S."/>
            <person name="Pearson D."/>
            <person name="Quail M.A."/>
            <person name="Rabbinowitsch E."/>
            <person name="Rutherford K.M."/>
            <person name="Rutter S."/>
            <person name="Saunders D."/>
            <person name="Seeger K."/>
            <person name="Sharp S."/>
            <person name="Skelton J."/>
            <person name="Simmonds M.N."/>
            <person name="Squares R."/>
            <person name="Squares S."/>
            <person name="Stevens K."/>
            <person name="Taylor K."/>
            <person name="Taylor R.G."/>
            <person name="Tivey A."/>
            <person name="Walsh S.V."/>
            <person name="Warren T."/>
            <person name="Whitehead S."/>
            <person name="Woodward J.R."/>
            <person name="Volckaert G."/>
            <person name="Aert R."/>
            <person name="Robben J."/>
            <person name="Grymonprez B."/>
            <person name="Weltjens I."/>
            <person name="Vanstreels E."/>
            <person name="Rieger M."/>
            <person name="Schaefer M."/>
            <person name="Mueller-Auer S."/>
            <person name="Gabel C."/>
            <person name="Fuchs M."/>
            <person name="Duesterhoeft A."/>
            <person name="Fritzc C."/>
            <person name="Holzer E."/>
            <person name="Moestl D."/>
            <person name="Hilbert H."/>
            <person name="Borzym K."/>
            <person name="Langer I."/>
            <person name="Beck A."/>
            <person name="Lehrach H."/>
            <person name="Reinhardt R."/>
            <person name="Pohl T.M."/>
            <person name="Eger P."/>
            <person name="Zimmermann W."/>
            <person name="Wedler H."/>
            <person name="Wambutt R."/>
            <person name="Purnelle B."/>
            <person name="Goffeau A."/>
            <person name="Cadieu E."/>
            <person name="Dreano S."/>
            <person name="Gloux S."/>
            <person name="Lelaure V."/>
            <person name="Mottier S."/>
            <person name="Galibert F."/>
            <person name="Aves S.J."/>
            <person name="Xiang Z."/>
            <person name="Hunt C."/>
            <person name="Moore K."/>
            <person name="Hurst S.M."/>
            <person name="Lucas M."/>
            <person name="Rochet M."/>
            <person name="Gaillardin C."/>
            <person name="Tallada V.A."/>
            <person name="Garzon A."/>
            <person name="Thode G."/>
            <person name="Daga R.R."/>
            <person name="Cruzado L."/>
            <person name="Jimenez J."/>
            <person name="Sanchez M."/>
            <person name="del Rey F."/>
            <person name="Benito J."/>
            <person name="Dominguez A."/>
            <person name="Revuelta J.L."/>
            <person name="Moreno S."/>
            <person name="Armstrong J."/>
            <person name="Forsburg S.L."/>
            <person name="Cerutti L."/>
            <person name="Lowe T."/>
            <person name="McCombie W.R."/>
            <person name="Paulsen I."/>
            <person name="Potashkin J."/>
            <person name="Shpakovski G.V."/>
            <person name="Ussery D."/>
            <person name="Barrell B.G."/>
            <person name="Nurse P."/>
        </authorList>
    </citation>
    <scope>NUCLEOTIDE SEQUENCE [LARGE SCALE GENOMIC DNA]</scope>
    <source>
        <strain>972 / ATCC 24843</strain>
    </source>
</reference>
<keyword id="KW-0375">Hydrogen ion transport</keyword>
<keyword id="KW-0406">Ion transport</keyword>
<keyword id="KW-0472">Membrane</keyword>
<keyword id="KW-1185">Reference proteome</keyword>
<keyword id="KW-0813">Transport</keyword>
<keyword id="KW-0926">Vacuole</keyword>
<accession>O43046</accession>
<organism>
    <name type="scientific">Schizosaccharomyces pombe (strain 972 / ATCC 24843)</name>
    <name type="common">Fission yeast</name>
    <dbReference type="NCBI Taxonomy" id="284812"/>
    <lineage>
        <taxon>Eukaryota</taxon>
        <taxon>Fungi</taxon>
        <taxon>Dikarya</taxon>
        <taxon>Ascomycota</taxon>
        <taxon>Taphrinomycotina</taxon>
        <taxon>Schizosaccharomycetes</taxon>
        <taxon>Schizosaccharomycetales</taxon>
        <taxon>Schizosaccharomycetaceae</taxon>
        <taxon>Schizosaccharomyces</taxon>
    </lineage>
</organism>
<protein>
    <recommendedName>
        <fullName>V-type proton ATPase subunit F</fullName>
        <shortName>V-ATPase subunit F</shortName>
    </recommendedName>
    <alternativeName>
        <fullName>Vacuolar proton pump subunit F</fullName>
    </alternativeName>
</protein>
<gene>
    <name evidence="3" type="primary">vma7</name>
    <name evidence="3" type="ORF">SPBC3B9.18c</name>
</gene>
<dbReference type="EMBL" id="CU329671">
    <property type="protein sequence ID" value="CAA17798.1"/>
    <property type="molecule type" value="Genomic_DNA"/>
</dbReference>
<dbReference type="PIR" id="T40357">
    <property type="entry name" value="T40357"/>
</dbReference>
<dbReference type="RefSeq" id="NP_596676.1">
    <property type="nucleotide sequence ID" value="NM_001022598.2"/>
</dbReference>
<dbReference type="SMR" id="O43046"/>
<dbReference type="BioGRID" id="277498">
    <property type="interactions" value="1"/>
</dbReference>
<dbReference type="FunCoup" id="O43046">
    <property type="interactions" value="287"/>
</dbReference>
<dbReference type="STRING" id="284812.O43046"/>
<dbReference type="iPTMnet" id="O43046"/>
<dbReference type="PaxDb" id="4896-SPBC3B9.18c.1"/>
<dbReference type="EnsemblFungi" id="SPBC3B9.18c.1">
    <property type="protein sequence ID" value="SPBC3B9.18c.1:pep"/>
    <property type="gene ID" value="SPBC3B9.18c"/>
</dbReference>
<dbReference type="GeneID" id="2540982"/>
<dbReference type="KEGG" id="spo:2540982"/>
<dbReference type="PomBase" id="SPBC3B9.18c">
    <property type="gene designation" value="vma7"/>
</dbReference>
<dbReference type="VEuPathDB" id="FungiDB:SPBC3B9.18c"/>
<dbReference type="eggNOG" id="KOG3432">
    <property type="taxonomic scope" value="Eukaryota"/>
</dbReference>
<dbReference type="HOGENOM" id="CLU_135754_0_0_1"/>
<dbReference type="InParanoid" id="O43046"/>
<dbReference type="OMA" id="IIICQHI"/>
<dbReference type="PhylomeDB" id="O43046"/>
<dbReference type="Reactome" id="R-SPO-1222556">
    <property type="pathway name" value="ROS and RNS production in phagocytes"/>
</dbReference>
<dbReference type="Reactome" id="R-SPO-77387">
    <property type="pathway name" value="Insulin receptor recycling"/>
</dbReference>
<dbReference type="Reactome" id="R-SPO-917977">
    <property type="pathway name" value="Transferrin endocytosis and recycling"/>
</dbReference>
<dbReference type="Reactome" id="R-SPO-9639288">
    <property type="pathway name" value="Amino acids regulate mTORC1"/>
</dbReference>
<dbReference type="PRO" id="PR:O43046"/>
<dbReference type="Proteomes" id="UP000002485">
    <property type="component" value="Chromosome II"/>
</dbReference>
<dbReference type="GO" id="GO:0005829">
    <property type="term" value="C:cytosol"/>
    <property type="evidence" value="ECO:0007005"/>
    <property type="project" value="PomBase"/>
</dbReference>
<dbReference type="GO" id="GO:0000329">
    <property type="term" value="C:fungal-type vacuole membrane"/>
    <property type="evidence" value="ECO:0000266"/>
    <property type="project" value="PomBase"/>
</dbReference>
<dbReference type="GO" id="GO:0016020">
    <property type="term" value="C:membrane"/>
    <property type="evidence" value="ECO:0000318"/>
    <property type="project" value="GO_Central"/>
</dbReference>
<dbReference type="GO" id="GO:0005634">
    <property type="term" value="C:nucleus"/>
    <property type="evidence" value="ECO:0007005"/>
    <property type="project" value="PomBase"/>
</dbReference>
<dbReference type="GO" id="GO:0000221">
    <property type="term" value="C:vacuolar proton-transporting V-type ATPase, V1 domain"/>
    <property type="evidence" value="ECO:0000266"/>
    <property type="project" value="PomBase"/>
</dbReference>
<dbReference type="GO" id="GO:0016887">
    <property type="term" value="F:ATP hydrolysis activity"/>
    <property type="evidence" value="ECO:0000305"/>
    <property type="project" value="PomBase"/>
</dbReference>
<dbReference type="GO" id="GO:0046961">
    <property type="term" value="F:proton-transporting ATPase activity, rotational mechanism"/>
    <property type="evidence" value="ECO:0000266"/>
    <property type="project" value="PomBase"/>
</dbReference>
<dbReference type="GO" id="GO:1902600">
    <property type="term" value="P:proton transmembrane transport"/>
    <property type="evidence" value="ECO:0000305"/>
    <property type="project" value="PomBase"/>
</dbReference>
<dbReference type="FunFam" id="3.40.50.10580:FF:000002">
    <property type="entry name" value="V-type proton ATPase subunit F"/>
    <property type="match status" value="1"/>
</dbReference>
<dbReference type="Gene3D" id="3.40.50.10580">
    <property type="entry name" value="ATPase, V1 complex, subunit F"/>
    <property type="match status" value="1"/>
</dbReference>
<dbReference type="InterPro" id="IPR008218">
    <property type="entry name" value="ATPase_V1-cplx_f_g_su"/>
</dbReference>
<dbReference type="InterPro" id="IPR005772">
    <property type="entry name" value="ATPase_V1-cplx_fsu_euk"/>
</dbReference>
<dbReference type="InterPro" id="IPR036906">
    <property type="entry name" value="ATPase_V1_fsu_sf"/>
</dbReference>
<dbReference type="NCBIfam" id="TIGR01101">
    <property type="entry name" value="V_ATP_synt_F"/>
    <property type="match status" value="1"/>
</dbReference>
<dbReference type="PANTHER" id="PTHR13861:SF2">
    <property type="entry name" value="V-TYPE PROTON ATPASE SUBUNIT F"/>
    <property type="match status" value="1"/>
</dbReference>
<dbReference type="PANTHER" id="PTHR13861">
    <property type="entry name" value="VACUOLAR ATP SYNTHASE SUBUNIT F"/>
    <property type="match status" value="1"/>
</dbReference>
<dbReference type="Pfam" id="PF01990">
    <property type="entry name" value="ATP-synt_F"/>
    <property type="match status" value="1"/>
</dbReference>
<dbReference type="PIRSF" id="PIRSF015945">
    <property type="entry name" value="ATPase_V1_F_euk"/>
    <property type="match status" value="1"/>
</dbReference>
<dbReference type="SUPFAM" id="SSF159468">
    <property type="entry name" value="AtpF-like"/>
    <property type="match status" value="1"/>
</dbReference>
<proteinExistence type="inferred from homology"/>
<comment type="function">
    <text evidence="1">Subunit of the V1 complex of vacuolar(H+)-ATPase (V-ATPase), a multisubunit enzyme composed of a peripheral complex (V1) that hydrolyzes ATP and a membrane integral complex (V0) that translocates protons (By similarity). V-ATPase is responsible for acidifying and maintaining the pH of intracellular compartments (By similarity).</text>
</comment>
<comment type="subunit">
    <text evidence="1">V-ATPase is a heteromultimeric enzyme composed of a peripheral catalytic V1 complex (components A to H) attached to an integral membrane V0 proton pore complex (components: a, c, c', c'', d, e, f and VOA1).</text>
</comment>
<comment type="subcellular location">
    <subcellularLocation>
        <location evidence="1">Vacuole membrane</location>
        <topology evidence="2">Peripheral membrane protein</topology>
        <orientation evidence="2">Cytoplasmic side</orientation>
    </subcellularLocation>
</comment>
<comment type="similarity">
    <text evidence="2">Belongs to the V-ATPase F subunit family.</text>
</comment>
<evidence type="ECO:0000250" key="1">
    <source>
        <dbReference type="UniProtKB" id="P39111"/>
    </source>
</evidence>
<evidence type="ECO:0000305" key="2"/>
<evidence type="ECO:0000312" key="3">
    <source>
        <dbReference type="PomBase" id="SPBC3B9.18c"/>
    </source>
</evidence>
<name>VATF_SCHPO</name>
<sequence length="120" mass="13618">MSSQSYRERTLVSVIGDDDTVTGMLLAGTGQVNENGDKNFFIITQKTTDEQIAEAFDDYTTKRKDIAIVLINQFAAERIRDRIENHVQAFPAVLEIPSKDDPYDPEKDSILRRVRKIIGE</sequence>
<feature type="chain" id="PRO_0000144811" description="V-type proton ATPase subunit F">
    <location>
        <begin position="1"/>
        <end position="120"/>
    </location>
</feature>